<evidence type="ECO:0000255" key="1">
    <source>
        <dbReference type="HAMAP-Rule" id="MF_01345"/>
    </source>
</evidence>
<evidence type="ECO:0000305" key="2"/>
<name>RS17_PSET1</name>
<keyword id="KW-1185">Reference proteome</keyword>
<keyword id="KW-0687">Ribonucleoprotein</keyword>
<keyword id="KW-0689">Ribosomal protein</keyword>
<keyword id="KW-0694">RNA-binding</keyword>
<keyword id="KW-0699">rRNA-binding</keyword>
<feature type="chain" id="PRO_0000233541" description="Small ribosomal subunit protein uS17">
    <location>
        <begin position="1"/>
        <end position="85"/>
    </location>
</feature>
<reference key="1">
    <citation type="journal article" date="2005" name="Genome Res.">
        <title>Coping with cold: the genome of the versatile marine Antarctica bacterium Pseudoalteromonas haloplanktis TAC125.</title>
        <authorList>
            <person name="Medigue C."/>
            <person name="Krin E."/>
            <person name="Pascal G."/>
            <person name="Barbe V."/>
            <person name="Bernsel A."/>
            <person name="Bertin P.N."/>
            <person name="Cheung F."/>
            <person name="Cruveiller S."/>
            <person name="D'Amico S."/>
            <person name="Duilio A."/>
            <person name="Fang G."/>
            <person name="Feller G."/>
            <person name="Ho C."/>
            <person name="Mangenot S."/>
            <person name="Marino G."/>
            <person name="Nilsson J."/>
            <person name="Parrilli E."/>
            <person name="Rocha E.P.C."/>
            <person name="Rouy Z."/>
            <person name="Sekowska A."/>
            <person name="Tutino M.L."/>
            <person name="Vallenet D."/>
            <person name="von Heijne G."/>
            <person name="Danchin A."/>
        </authorList>
    </citation>
    <scope>NUCLEOTIDE SEQUENCE [LARGE SCALE GENOMIC DNA]</scope>
    <source>
        <strain>TAC 125</strain>
    </source>
</reference>
<protein>
    <recommendedName>
        <fullName evidence="1">Small ribosomal subunit protein uS17</fullName>
    </recommendedName>
    <alternativeName>
        <fullName evidence="2">30S ribosomal protein S17</fullName>
    </alternativeName>
</protein>
<gene>
    <name evidence="1" type="primary">rpsQ</name>
    <name type="ordered locus">PSHAa0153</name>
</gene>
<organism>
    <name type="scientific">Pseudoalteromonas translucida (strain TAC 125)</name>
    <dbReference type="NCBI Taxonomy" id="326442"/>
    <lineage>
        <taxon>Bacteria</taxon>
        <taxon>Pseudomonadati</taxon>
        <taxon>Pseudomonadota</taxon>
        <taxon>Gammaproteobacteria</taxon>
        <taxon>Alteromonadales</taxon>
        <taxon>Pseudoalteromonadaceae</taxon>
        <taxon>Pseudoalteromonas</taxon>
    </lineage>
</organism>
<dbReference type="EMBL" id="CR954246">
    <property type="protein sequence ID" value="CAI85257.1"/>
    <property type="molecule type" value="Genomic_DNA"/>
</dbReference>
<dbReference type="SMR" id="Q3IFM3"/>
<dbReference type="STRING" id="326442.PSHAa0153"/>
<dbReference type="KEGG" id="pha:PSHAa0153"/>
<dbReference type="eggNOG" id="COG0186">
    <property type="taxonomic scope" value="Bacteria"/>
</dbReference>
<dbReference type="HOGENOM" id="CLU_073626_1_1_6"/>
<dbReference type="BioCyc" id="PHAL326442:PSHA_RS00780-MONOMER"/>
<dbReference type="Proteomes" id="UP000006843">
    <property type="component" value="Chromosome I"/>
</dbReference>
<dbReference type="GO" id="GO:0022627">
    <property type="term" value="C:cytosolic small ribosomal subunit"/>
    <property type="evidence" value="ECO:0007669"/>
    <property type="project" value="TreeGrafter"/>
</dbReference>
<dbReference type="GO" id="GO:0019843">
    <property type="term" value="F:rRNA binding"/>
    <property type="evidence" value="ECO:0007669"/>
    <property type="project" value="UniProtKB-UniRule"/>
</dbReference>
<dbReference type="GO" id="GO:0003735">
    <property type="term" value="F:structural constituent of ribosome"/>
    <property type="evidence" value="ECO:0007669"/>
    <property type="project" value="InterPro"/>
</dbReference>
<dbReference type="GO" id="GO:0006412">
    <property type="term" value="P:translation"/>
    <property type="evidence" value="ECO:0007669"/>
    <property type="project" value="UniProtKB-UniRule"/>
</dbReference>
<dbReference type="CDD" id="cd00364">
    <property type="entry name" value="Ribosomal_uS17"/>
    <property type="match status" value="1"/>
</dbReference>
<dbReference type="FunFam" id="2.40.50.140:FF:000014">
    <property type="entry name" value="30S ribosomal protein S17"/>
    <property type="match status" value="1"/>
</dbReference>
<dbReference type="Gene3D" id="2.40.50.140">
    <property type="entry name" value="Nucleic acid-binding proteins"/>
    <property type="match status" value="1"/>
</dbReference>
<dbReference type="HAMAP" id="MF_01345_B">
    <property type="entry name" value="Ribosomal_uS17_B"/>
    <property type="match status" value="1"/>
</dbReference>
<dbReference type="InterPro" id="IPR012340">
    <property type="entry name" value="NA-bd_OB-fold"/>
</dbReference>
<dbReference type="InterPro" id="IPR000266">
    <property type="entry name" value="Ribosomal_uS17"/>
</dbReference>
<dbReference type="InterPro" id="IPR019984">
    <property type="entry name" value="Ribosomal_uS17_bact/chlr"/>
</dbReference>
<dbReference type="NCBIfam" id="NF004123">
    <property type="entry name" value="PRK05610.1"/>
    <property type="match status" value="1"/>
</dbReference>
<dbReference type="NCBIfam" id="TIGR03635">
    <property type="entry name" value="uS17_bact"/>
    <property type="match status" value="1"/>
</dbReference>
<dbReference type="PANTHER" id="PTHR10744">
    <property type="entry name" value="40S RIBOSOMAL PROTEIN S11 FAMILY MEMBER"/>
    <property type="match status" value="1"/>
</dbReference>
<dbReference type="PANTHER" id="PTHR10744:SF1">
    <property type="entry name" value="SMALL RIBOSOMAL SUBUNIT PROTEIN US17M"/>
    <property type="match status" value="1"/>
</dbReference>
<dbReference type="Pfam" id="PF00366">
    <property type="entry name" value="Ribosomal_S17"/>
    <property type="match status" value="1"/>
</dbReference>
<dbReference type="PRINTS" id="PR00973">
    <property type="entry name" value="RIBOSOMALS17"/>
</dbReference>
<dbReference type="SUPFAM" id="SSF50249">
    <property type="entry name" value="Nucleic acid-binding proteins"/>
    <property type="match status" value="1"/>
</dbReference>
<accession>Q3IFM3</accession>
<proteinExistence type="inferred from homology"/>
<comment type="function">
    <text evidence="1">One of the primary rRNA binding proteins, it binds specifically to the 5'-end of 16S ribosomal RNA.</text>
</comment>
<comment type="subunit">
    <text evidence="1">Part of the 30S ribosomal subunit.</text>
</comment>
<comment type="similarity">
    <text evidence="1">Belongs to the universal ribosomal protein uS17 family.</text>
</comment>
<sequence>MSDKIRTLQGRVISDKMEKSFTIAIARYVKHPIYGKFIRRTTKLHVHDENNEVQAGDVVTIRECAPISKSKSWTFVAVIERPKQA</sequence>